<comment type="function">
    <text evidence="3">Catalyzes the isomerization of L-ribulose 5-phosphate to D-xylulose 5-phosphate. Is involved in the anaerobic L-ascorbate utilization.</text>
</comment>
<comment type="catalytic activity">
    <reaction evidence="3">
        <text>L-ribulose 5-phosphate = D-xylulose 5-phosphate</text>
        <dbReference type="Rhea" id="RHEA:22368"/>
        <dbReference type="ChEBI" id="CHEBI:57737"/>
        <dbReference type="ChEBI" id="CHEBI:58226"/>
        <dbReference type="EC" id="5.1.3.4"/>
    </reaction>
</comment>
<comment type="cofactor">
    <cofactor evidence="1">
        <name>Zn(2+)</name>
        <dbReference type="ChEBI" id="CHEBI:29105"/>
    </cofactor>
    <text evidence="1">Binds 1 zinc ion per subunit.</text>
</comment>
<comment type="pathway">
    <text evidence="3">Cofactor degradation; L-ascorbate degradation; D-xylulose 5-phosphate from L-ascorbate: step 4/4.</text>
</comment>
<comment type="similarity">
    <text evidence="3">Belongs to the aldolase class II family. AraD/FucA subfamily.</text>
</comment>
<protein>
    <recommendedName>
        <fullName evidence="3">Probable L-ribulose-5-phosphate 4-epimerase UlaF</fullName>
        <ecNumber evidence="3">5.1.3.4</ecNumber>
    </recommendedName>
    <alternativeName>
        <fullName evidence="3">L-ascorbate utilization protein F</fullName>
    </alternativeName>
    <alternativeName>
        <fullName evidence="3">Phosphoribulose isomerase</fullName>
    </alternativeName>
</protein>
<name>ULAF_MYCPN</name>
<evidence type="ECO:0000250" key="1">
    <source>
        <dbReference type="UniProtKB" id="P08203"/>
    </source>
</evidence>
<evidence type="ECO:0000250" key="2">
    <source>
        <dbReference type="UniProtKB" id="P0AB87"/>
    </source>
</evidence>
<evidence type="ECO:0000250" key="3">
    <source>
        <dbReference type="UniProtKB" id="P39306"/>
    </source>
</evidence>
<reference key="1">
    <citation type="journal article" date="1996" name="Nucleic Acids Res.">
        <title>Complete sequence analysis of the genome of the bacterium Mycoplasma pneumoniae.</title>
        <authorList>
            <person name="Himmelreich R."/>
            <person name="Hilbert H."/>
            <person name="Plagens H."/>
            <person name="Pirkl E."/>
            <person name="Li B.-C."/>
            <person name="Herrmann R."/>
        </authorList>
    </citation>
    <scope>NUCLEOTIDE SEQUENCE [LARGE SCALE GENOMIC DNA]</scope>
    <source>
        <strain>ATCC 29342 / M129 / Subtype 1</strain>
    </source>
</reference>
<organism>
    <name type="scientific">Mycoplasma pneumoniae (strain ATCC 29342 / M129 / Subtype 1)</name>
    <name type="common">Mycoplasmoides pneumoniae</name>
    <dbReference type="NCBI Taxonomy" id="272634"/>
    <lineage>
        <taxon>Bacteria</taxon>
        <taxon>Bacillati</taxon>
        <taxon>Mycoplasmatota</taxon>
        <taxon>Mycoplasmoidales</taxon>
        <taxon>Mycoplasmoidaceae</taxon>
        <taxon>Mycoplasmoides</taxon>
    </lineage>
</organism>
<feature type="chain" id="PRO_0000162922" description="Probable L-ribulose-5-phosphate 4-epimerase UlaF">
    <location>
        <begin position="1"/>
        <end position="242"/>
    </location>
</feature>
<feature type="active site" description="Proton donor/acceptor" evidence="1">
    <location>
        <position position="124"/>
    </location>
</feature>
<feature type="active site" description="Proton donor/acceptor" evidence="1">
    <location>
        <position position="234"/>
    </location>
</feature>
<feature type="binding site" evidence="2">
    <location>
        <begin position="31"/>
        <end position="32"/>
    </location>
    <ligand>
        <name>substrate</name>
    </ligand>
</feature>
<feature type="binding site" evidence="2">
    <location>
        <begin position="48"/>
        <end position="49"/>
    </location>
    <ligand>
        <name>substrate</name>
    </ligand>
</feature>
<feature type="binding site" evidence="2">
    <location>
        <begin position="78"/>
        <end position="79"/>
    </location>
    <ligand>
        <name>substrate</name>
    </ligand>
</feature>
<feature type="binding site" evidence="1">
    <location>
        <position position="80"/>
    </location>
    <ligand>
        <name>Zn(2+)</name>
        <dbReference type="ChEBI" id="CHEBI:29105"/>
    </ligand>
</feature>
<feature type="binding site" evidence="1">
    <location>
        <position position="99"/>
    </location>
    <ligand>
        <name>Zn(2+)</name>
        <dbReference type="ChEBI" id="CHEBI:29105"/>
    </ligand>
</feature>
<feature type="binding site" evidence="1">
    <location>
        <position position="101"/>
    </location>
    <ligand>
        <name>Zn(2+)</name>
        <dbReference type="ChEBI" id="CHEBI:29105"/>
    </ligand>
</feature>
<feature type="binding site" evidence="1">
    <location>
        <position position="175"/>
    </location>
    <ligand>
        <name>Zn(2+)</name>
        <dbReference type="ChEBI" id="CHEBI:29105"/>
    </ligand>
</feature>
<gene>
    <name evidence="3" type="primary">ulaF</name>
    <name type="synonym">sgaE</name>
    <name type="ordered locus">MPN_498</name>
    <name type="ORF">MP345</name>
</gene>
<dbReference type="EC" id="5.1.3.4" evidence="3"/>
<dbReference type="EMBL" id="U00089">
    <property type="protein sequence ID" value="AAB95992.1"/>
    <property type="molecule type" value="Genomic_DNA"/>
</dbReference>
<dbReference type="PIR" id="S73671">
    <property type="entry name" value="S73671"/>
</dbReference>
<dbReference type="RefSeq" id="NP_110186.1">
    <property type="nucleotide sequence ID" value="NC_000912.1"/>
</dbReference>
<dbReference type="RefSeq" id="WP_010874854.1">
    <property type="nucleotide sequence ID" value="NZ_OU342337.1"/>
</dbReference>
<dbReference type="SMR" id="P75289"/>
<dbReference type="STRING" id="272634.MPN_498"/>
<dbReference type="EnsemblBacteria" id="AAB95992">
    <property type="protein sequence ID" value="AAB95992"/>
    <property type="gene ID" value="MPN_498"/>
</dbReference>
<dbReference type="KEGG" id="mpn:MPN_498"/>
<dbReference type="PATRIC" id="fig|272634.6.peg.541"/>
<dbReference type="HOGENOM" id="CLU_006033_5_0_14"/>
<dbReference type="OrthoDB" id="9786287at2"/>
<dbReference type="BioCyc" id="MPNE272634:G1GJ3-815-MONOMER"/>
<dbReference type="UniPathway" id="UPA00263">
    <property type="reaction ID" value="UER00380"/>
</dbReference>
<dbReference type="Proteomes" id="UP000000808">
    <property type="component" value="Chromosome"/>
</dbReference>
<dbReference type="GO" id="GO:0005829">
    <property type="term" value="C:cytosol"/>
    <property type="evidence" value="ECO:0007669"/>
    <property type="project" value="TreeGrafter"/>
</dbReference>
<dbReference type="GO" id="GO:0016832">
    <property type="term" value="F:aldehyde-lyase activity"/>
    <property type="evidence" value="ECO:0007669"/>
    <property type="project" value="TreeGrafter"/>
</dbReference>
<dbReference type="GO" id="GO:0008742">
    <property type="term" value="F:L-ribulose-phosphate 4-epimerase activity"/>
    <property type="evidence" value="ECO:0000250"/>
    <property type="project" value="UniProtKB"/>
</dbReference>
<dbReference type="GO" id="GO:0008270">
    <property type="term" value="F:zinc ion binding"/>
    <property type="evidence" value="ECO:0000250"/>
    <property type="project" value="UniProtKB"/>
</dbReference>
<dbReference type="GO" id="GO:0019854">
    <property type="term" value="P:L-ascorbic acid catabolic process"/>
    <property type="evidence" value="ECO:0007669"/>
    <property type="project" value="UniProtKB-UniPathway"/>
</dbReference>
<dbReference type="GO" id="GO:0019852">
    <property type="term" value="P:L-ascorbic acid metabolic process"/>
    <property type="evidence" value="ECO:0000250"/>
    <property type="project" value="UniProtKB"/>
</dbReference>
<dbReference type="GO" id="GO:0019323">
    <property type="term" value="P:pentose catabolic process"/>
    <property type="evidence" value="ECO:0007669"/>
    <property type="project" value="TreeGrafter"/>
</dbReference>
<dbReference type="FunFam" id="3.40.225.10:FF:000001">
    <property type="entry name" value="L-ribulose-5-phosphate 4-epimerase UlaF"/>
    <property type="match status" value="1"/>
</dbReference>
<dbReference type="Gene3D" id="3.40.225.10">
    <property type="entry name" value="Class II aldolase/adducin N-terminal domain"/>
    <property type="match status" value="1"/>
</dbReference>
<dbReference type="InterPro" id="IPR050197">
    <property type="entry name" value="Aldolase_class_II_sugar_metab"/>
</dbReference>
<dbReference type="InterPro" id="IPR001303">
    <property type="entry name" value="Aldolase_II/adducin_N"/>
</dbReference>
<dbReference type="InterPro" id="IPR036409">
    <property type="entry name" value="Aldolase_II/adducin_N_sf"/>
</dbReference>
<dbReference type="NCBIfam" id="NF006047">
    <property type="entry name" value="PRK08193.1"/>
    <property type="match status" value="1"/>
</dbReference>
<dbReference type="PANTHER" id="PTHR22789">
    <property type="entry name" value="FUCULOSE PHOSPHATE ALDOLASE"/>
    <property type="match status" value="1"/>
</dbReference>
<dbReference type="PANTHER" id="PTHR22789:SF8">
    <property type="entry name" value="L-RIBULOSE-5-PHOSPHATE 4-EPIMERASE SGBE"/>
    <property type="match status" value="1"/>
</dbReference>
<dbReference type="Pfam" id="PF00596">
    <property type="entry name" value="Aldolase_II"/>
    <property type="match status" value="1"/>
</dbReference>
<dbReference type="SMART" id="SM01007">
    <property type="entry name" value="Aldolase_II"/>
    <property type="match status" value="1"/>
</dbReference>
<dbReference type="SUPFAM" id="SSF53639">
    <property type="entry name" value="AraD/HMP-PK domain-like"/>
    <property type="match status" value="1"/>
</dbReference>
<proteinExistence type="inferred from homology"/>
<sequence length="242" mass="27092">MDQKMINDLKEQVFQTNLLLPKYGLVIHTWGNVSMIAPNRQFFVIKPSGVSYDKMRAQDMVVVDLDNNVLDTNGLKPSSDTPTHALMYKHCPDIKAIVHTHSTFATSFAQADKPIPCLGTTHADNFFGPIPCTRALSDSEINGAYEHNTGLVILEHLKNNQVDVNACAAILVKEHGSFVWSNKNGKDAVDRALTLEQVAQMALYTQMINPHMKEANPALQQKHYNRKHGKDAYYGQDTKQED</sequence>
<accession>P75289</accession>
<keyword id="KW-0119">Carbohydrate metabolism</keyword>
<keyword id="KW-0413">Isomerase</keyword>
<keyword id="KW-0479">Metal-binding</keyword>
<keyword id="KW-1185">Reference proteome</keyword>
<keyword id="KW-0862">Zinc</keyword>